<sequence length="330" mass="35368">MFSVVLGAAVAFFVTVTLGSSFIRFLQTRKFGQYVREEGPETHLIKAGTPTMGGVLMLMGLVAGLAVVARPNPATFSVLLIVAATAGVGLYDDWQKVSKRHSEGLSARYKFLLLSLVVVLADVMALRYVGVTQNVIVPGFSNNLVLGPGVVGVGLFSVLMLFVIVGTTNAVNLTDGLDGLAAGAGGIALLTYTAIAFLERQYDLAIICGAMVGAIIGFLWYNSHPAEIFMGDTGSLAIGGVLSAAAILTKTEMLLPVIGGLFVIVALSVMIQVVVFKLTRRRVFKMAPIHHHFEMLGWAENKVVVRFWIVQSAFSALGFLMYYFFLYSSV</sequence>
<dbReference type="EC" id="2.7.8.13" evidence="1"/>
<dbReference type="EMBL" id="CP000386">
    <property type="protein sequence ID" value="ABG04458.1"/>
    <property type="molecule type" value="Genomic_DNA"/>
</dbReference>
<dbReference type="RefSeq" id="WP_011564475.1">
    <property type="nucleotide sequence ID" value="NC_008148.1"/>
</dbReference>
<dbReference type="SMR" id="Q1AVX0"/>
<dbReference type="STRING" id="266117.Rxyl_1496"/>
<dbReference type="KEGG" id="rxy:Rxyl_1496"/>
<dbReference type="eggNOG" id="COG0472">
    <property type="taxonomic scope" value="Bacteria"/>
</dbReference>
<dbReference type="HOGENOM" id="CLU_023982_0_0_11"/>
<dbReference type="OrthoDB" id="9805475at2"/>
<dbReference type="PhylomeDB" id="Q1AVX0"/>
<dbReference type="UniPathway" id="UPA00219"/>
<dbReference type="Proteomes" id="UP000006637">
    <property type="component" value="Chromosome"/>
</dbReference>
<dbReference type="GO" id="GO:0005886">
    <property type="term" value="C:plasma membrane"/>
    <property type="evidence" value="ECO:0007669"/>
    <property type="project" value="UniProtKB-SubCell"/>
</dbReference>
<dbReference type="GO" id="GO:0046872">
    <property type="term" value="F:metal ion binding"/>
    <property type="evidence" value="ECO:0007669"/>
    <property type="project" value="UniProtKB-KW"/>
</dbReference>
<dbReference type="GO" id="GO:0008963">
    <property type="term" value="F:phospho-N-acetylmuramoyl-pentapeptide-transferase activity"/>
    <property type="evidence" value="ECO:0007669"/>
    <property type="project" value="UniProtKB-UniRule"/>
</dbReference>
<dbReference type="GO" id="GO:0051992">
    <property type="term" value="F:UDP-N-acetylmuramoyl-L-alanyl-D-glutamyl-meso-2,6-diaminopimelyl-D-alanyl-D-alanine:undecaprenyl-phosphate transferase activity"/>
    <property type="evidence" value="ECO:0007669"/>
    <property type="project" value="RHEA"/>
</dbReference>
<dbReference type="GO" id="GO:0051301">
    <property type="term" value="P:cell division"/>
    <property type="evidence" value="ECO:0007669"/>
    <property type="project" value="UniProtKB-KW"/>
</dbReference>
<dbReference type="GO" id="GO:0071555">
    <property type="term" value="P:cell wall organization"/>
    <property type="evidence" value="ECO:0007669"/>
    <property type="project" value="UniProtKB-KW"/>
</dbReference>
<dbReference type="GO" id="GO:0009252">
    <property type="term" value="P:peptidoglycan biosynthetic process"/>
    <property type="evidence" value="ECO:0007669"/>
    <property type="project" value="UniProtKB-UniRule"/>
</dbReference>
<dbReference type="GO" id="GO:0008360">
    <property type="term" value="P:regulation of cell shape"/>
    <property type="evidence" value="ECO:0007669"/>
    <property type="project" value="UniProtKB-KW"/>
</dbReference>
<dbReference type="CDD" id="cd06852">
    <property type="entry name" value="GT_MraY"/>
    <property type="match status" value="1"/>
</dbReference>
<dbReference type="HAMAP" id="MF_00038">
    <property type="entry name" value="MraY"/>
    <property type="match status" value="1"/>
</dbReference>
<dbReference type="InterPro" id="IPR000715">
    <property type="entry name" value="Glycosyl_transferase_4"/>
</dbReference>
<dbReference type="InterPro" id="IPR003524">
    <property type="entry name" value="PNAcMuramoyl-5peptid_Trfase"/>
</dbReference>
<dbReference type="InterPro" id="IPR018480">
    <property type="entry name" value="PNAcMuramoyl-5peptid_Trfase_CS"/>
</dbReference>
<dbReference type="NCBIfam" id="TIGR00445">
    <property type="entry name" value="mraY"/>
    <property type="match status" value="1"/>
</dbReference>
<dbReference type="PANTHER" id="PTHR22926">
    <property type="entry name" value="PHOSPHO-N-ACETYLMURAMOYL-PENTAPEPTIDE-TRANSFERASE"/>
    <property type="match status" value="1"/>
</dbReference>
<dbReference type="PANTHER" id="PTHR22926:SF5">
    <property type="entry name" value="PHOSPHO-N-ACETYLMURAMOYL-PENTAPEPTIDE-TRANSFERASE HOMOLOG"/>
    <property type="match status" value="1"/>
</dbReference>
<dbReference type="Pfam" id="PF00953">
    <property type="entry name" value="Glycos_transf_4"/>
    <property type="match status" value="1"/>
</dbReference>
<dbReference type="Pfam" id="PF10555">
    <property type="entry name" value="MraY_sig1"/>
    <property type="match status" value="1"/>
</dbReference>
<dbReference type="PROSITE" id="PS01347">
    <property type="entry name" value="MRAY_1"/>
    <property type="match status" value="1"/>
</dbReference>
<dbReference type="PROSITE" id="PS01348">
    <property type="entry name" value="MRAY_2"/>
    <property type="match status" value="1"/>
</dbReference>
<feature type="chain" id="PRO_1000003050" description="Phospho-N-acetylmuramoyl-pentapeptide-transferase">
    <location>
        <begin position="1"/>
        <end position="330"/>
    </location>
</feature>
<feature type="transmembrane region" description="Helical" evidence="1">
    <location>
        <begin position="3"/>
        <end position="23"/>
    </location>
</feature>
<feature type="transmembrane region" description="Helical" evidence="1">
    <location>
        <begin position="49"/>
        <end position="69"/>
    </location>
</feature>
<feature type="transmembrane region" description="Helical" evidence="1">
    <location>
        <begin position="71"/>
        <end position="91"/>
    </location>
</feature>
<feature type="transmembrane region" description="Helical" evidence="1">
    <location>
        <begin position="111"/>
        <end position="131"/>
    </location>
</feature>
<feature type="transmembrane region" description="Helical" evidence="1">
    <location>
        <begin position="145"/>
        <end position="165"/>
    </location>
</feature>
<feature type="transmembrane region" description="Helical" evidence="1">
    <location>
        <begin position="179"/>
        <end position="199"/>
    </location>
</feature>
<feature type="transmembrane region" description="Helical" evidence="1">
    <location>
        <begin position="204"/>
        <end position="224"/>
    </location>
</feature>
<feature type="transmembrane region" description="Helical" evidence="1">
    <location>
        <begin position="228"/>
        <end position="248"/>
    </location>
</feature>
<feature type="transmembrane region" description="Helical" evidence="1">
    <location>
        <begin position="256"/>
        <end position="276"/>
    </location>
</feature>
<feature type="transmembrane region" description="Helical" evidence="1">
    <location>
        <begin position="307"/>
        <end position="327"/>
    </location>
</feature>
<keyword id="KW-0131">Cell cycle</keyword>
<keyword id="KW-0132">Cell division</keyword>
<keyword id="KW-1003">Cell membrane</keyword>
<keyword id="KW-0133">Cell shape</keyword>
<keyword id="KW-0961">Cell wall biogenesis/degradation</keyword>
<keyword id="KW-0460">Magnesium</keyword>
<keyword id="KW-0472">Membrane</keyword>
<keyword id="KW-0479">Metal-binding</keyword>
<keyword id="KW-0573">Peptidoglycan synthesis</keyword>
<keyword id="KW-1185">Reference proteome</keyword>
<keyword id="KW-0808">Transferase</keyword>
<keyword id="KW-0812">Transmembrane</keyword>
<keyword id="KW-1133">Transmembrane helix</keyword>
<reference key="1">
    <citation type="submission" date="2006-06" db="EMBL/GenBank/DDBJ databases">
        <title>Complete sequence of Rubrobacter xylanophilus DSM 9941.</title>
        <authorList>
            <consortium name="US DOE Joint Genome Institute"/>
            <person name="Copeland A."/>
            <person name="Lucas S."/>
            <person name="Lapidus A."/>
            <person name="Barry K."/>
            <person name="Detter J.C."/>
            <person name="Glavina del Rio T."/>
            <person name="Hammon N."/>
            <person name="Israni S."/>
            <person name="Dalin E."/>
            <person name="Tice H."/>
            <person name="Pitluck S."/>
            <person name="Munk A.C."/>
            <person name="Brettin T."/>
            <person name="Bruce D."/>
            <person name="Han C."/>
            <person name="Tapia R."/>
            <person name="Gilna P."/>
            <person name="Schmutz J."/>
            <person name="Larimer F."/>
            <person name="Land M."/>
            <person name="Hauser L."/>
            <person name="Kyrpides N."/>
            <person name="Lykidis A."/>
            <person name="da Costa M.S."/>
            <person name="Rainey F.A."/>
            <person name="Empadinhas N."/>
            <person name="Jolivet E."/>
            <person name="Battista J.R."/>
            <person name="Richardson P."/>
        </authorList>
    </citation>
    <scope>NUCLEOTIDE SEQUENCE [LARGE SCALE GENOMIC DNA]</scope>
    <source>
        <strain>DSM 9941 / JCM 11954 / NBRC 16129 / PRD-1</strain>
    </source>
</reference>
<proteinExistence type="inferred from homology"/>
<organism>
    <name type="scientific">Rubrobacter xylanophilus (strain DSM 9941 / JCM 11954 / NBRC 16129 / PRD-1)</name>
    <dbReference type="NCBI Taxonomy" id="266117"/>
    <lineage>
        <taxon>Bacteria</taxon>
        <taxon>Bacillati</taxon>
        <taxon>Actinomycetota</taxon>
        <taxon>Rubrobacteria</taxon>
        <taxon>Rubrobacterales</taxon>
        <taxon>Rubrobacteraceae</taxon>
        <taxon>Rubrobacter</taxon>
    </lineage>
</organism>
<evidence type="ECO:0000255" key="1">
    <source>
        <dbReference type="HAMAP-Rule" id="MF_00038"/>
    </source>
</evidence>
<name>MRAY_RUBXD</name>
<comment type="function">
    <text evidence="1">Catalyzes the initial step of the lipid cycle reactions in the biosynthesis of the cell wall peptidoglycan: transfers peptidoglycan precursor phospho-MurNAc-pentapeptide from UDP-MurNAc-pentapeptide onto the lipid carrier undecaprenyl phosphate, yielding undecaprenyl-pyrophosphoryl-MurNAc-pentapeptide, known as lipid I.</text>
</comment>
<comment type="catalytic activity">
    <reaction evidence="1">
        <text>UDP-N-acetyl-alpha-D-muramoyl-L-alanyl-gamma-D-glutamyl-meso-2,6-diaminopimeloyl-D-alanyl-D-alanine + di-trans,octa-cis-undecaprenyl phosphate = di-trans,octa-cis-undecaprenyl diphospho-N-acetyl-alpha-D-muramoyl-L-alanyl-D-glutamyl-meso-2,6-diaminopimeloyl-D-alanyl-D-alanine + UMP</text>
        <dbReference type="Rhea" id="RHEA:28386"/>
        <dbReference type="ChEBI" id="CHEBI:57865"/>
        <dbReference type="ChEBI" id="CHEBI:60392"/>
        <dbReference type="ChEBI" id="CHEBI:61386"/>
        <dbReference type="ChEBI" id="CHEBI:61387"/>
        <dbReference type="EC" id="2.7.8.13"/>
    </reaction>
</comment>
<comment type="cofactor">
    <cofactor evidence="1">
        <name>Mg(2+)</name>
        <dbReference type="ChEBI" id="CHEBI:18420"/>
    </cofactor>
</comment>
<comment type="pathway">
    <text evidence="1">Cell wall biogenesis; peptidoglycan biosynthesis.</text>
</comment>
<comment type="subcellular location">
    <subcellularLocation>
        <location evidence="1">Cell membrane</location>
        <topology evidence="1">Multi-pass membrane protein</topology>
    </subcellularLocation>
</comment>
<comment type="similarity">
    <text evidence="1">Belongs to the glycosyltransferase 4 family. MraY subfamily.</text>
</comment>
<gene>
    <name evidence="1" type="primary">mraY</name>
    <name type="ordered locus">Rxyl_1496</name>
</gene>
<protein>
    <recommendedName>
        <fullName evidence="1">Phospho-N-acetylmuramoyl-pentapeptide-transferase</fullName>
        <ecNumber evidence="1">2.7.8.13</ecNumber>
    </recommendedName>
    <alternativeName>
        <fullName evidence="1">UDP-MurNAc-pentapeptide phosphotransferase</fullName>
    </alternativeName>
</protein>
<accession>Q1AVX0</accession>